<organism>
    <name type="scientific">Olea europaea</name>
    <name type="common">Common olive</name>
    <dbReference type="NCBI Taxonomy" id="4146"/>
    <lineage>
        <taxon>Eukaryota</taxon>
        <taxon>Viridiplantae</taxon>
        <taxon>Streptophyta</taxon>
        <taxon>Embryophyta</taxon>
        <taxon>Tracheophyta</taxon>
        <taxon>Spermatophyta</taxon>
        <taxon>Magnoliopsida</taxon>
        <taxon>eudicotyledons</taxon>
        <taxon>Gunneridae</taxon>
        <taxon>Pentapetalae</taxon>
        <taxon>asterids</taxon>
        <taxon>lamiids</taxon>
        <taxon>Lamiales</taxon>
        <taxon>Oleaceae</taxon>
        <taxon>Oleeae</taxon>
        <taxon>Olea</taxon>
    </lineage>
</organism>
<accession>P0DKF8</accession>
<accession>A4GDQ9</accession>
<evidence type="ECO:0000250" key="1"/>
<evidence type="ECO:0000305" key="2"/>
<comment type="function">
    <text evidence="1">Binds to actin and affects the structure of the cytoskeleton. At high concentrations, profilin prevents the polymerization of actin, whereas it enhances it at low concentrations (By similarity).</text>
</comment>
<comment type="subunit">
    <text evidence="1">Occurs in many kinds of cells as a complex with monomeric actin in a 1:1 ratio.</text>
</comment>
<comment type="subcellular location">
    <subcellularLocation>
        <location evidence="1">Cytoplasm</location>
        <location evidence="1">Cytoskeleton</location>
    </subcellularLocation>
</comment>
<comment type="PTM">
    <text evidence="1">Phosphorylated by MAP kinases.</text>
</comment>
<comment type="polymorphism">
    <text>Several isoforms of the allergen exist due to polymorphism.</text>
</comment>
<comment type="allergen">
    <text>Causes an allergic reaction in human.</text>
</comment>
<comment type="similarity">
    <text evidence="2">Belongs to the profilin family.</text>
</comment>
<proteinExistence type="evidence at protein level"/>
<protein>
    <recommendedName>
        <fullName>Profilin-2</fullName>
    </recommendedName>
    <alternativeName>
        <fullName>Pollen allergen Ole e 2</fullName>
    </alternativeName>
    <allergenName>Ole e 2</allergenName>
</protein>
<keyword id="KW-0009">Actin-binding</keyword>
<keyword id="KW-0020">Allergen</keyword>
<keyword id="KW-0963">Cytoplasm</keyword>
<keyword id="KW-0206">Cytoskeleton</keyword>
<keyword id="KW-1015">Disulfide bond</keyword>
<keyword id="KW-0597">Phosphoprotein</keyword>
<name>PROAQ_OLEEU</name>
<reference key="1">
    <citation type="submission" date="2007-03" db="EMBL/GenBank/DDBJ databases">
        <title>Isoforms of pollen allergens in two widespread olive cultivars from Iran.</title>
        <authorList>
            <person name="Soleimani A."/>
            <person name="Jimenez-Lopez J.C."/>
            <person name="Rodriguez-Garcia M.I."/>
            <person name="Alche J."/>
        </authorList>
    </citation>
    <scope>NUCLEOTIDE SEQUENCE [MRNA]</scope>
    <source>
        <strain>cv. Zard</strain>
    </source>
</reference>
<dbReference type="EMBL" id="EF541374">
    <property type="protein sequence ID" value="ABP58620.1"/>
    <property type="molecule type" value="mRNA"/>
</dbReference>
<dbReference type="EMBL" id="EF541376">
    <property type="protein sequence ID" value="ABP58622.1"/>
    <property type="molecule type" value="mRNA"/>
</dbReference>
<dbReference type="SMR" id="P0DKF8"/>
<dbReference type="GO" id="GO:0005938">
    <property type="term" value="C:cell cortex"/>
    <property type="evidence" value="ECO:0007669"/>
    <property type="project" value="TreeGrafter"/>
</dbReference>
<dbReference type="GO" id="GO:0005856">
    <property type="term" value="C:cytoskeleton"/>
    <property type="evidence" value="ECO:0007669"/>
    <property type="project" value="UniProtKB-SubCell"/>
</dbReference>
<dbReference type="GO" id="GO:0003785">
    <property type="term" value="F:actin monomer binding"/>
    <property type="evidence" value="ECO:0007669"/>
    <property type="project" value="TreeGrafter"/>
</dbReference>
<dbReference type="CDD" id="cd00148">
    <property type="entry name" value="PROF"/>
    <property type="match status" value="1"/>
</dbReference>
<dbReference type="FunFam" id="3.30.450.30:FF:000001">
    <property type="entry name" value="Profilin"/>
    <property type="match status" value="1"/>
</dbReference>
<dbReference type="Gene3D" id="3.30.450.30">
    <property type="entry name" value="Dynein light chain 2a, cytoplasmic"/>
    <property type="match status" value="1"/>
</dbReference>
<dbReference type="InterPro" id="IPR048278">
    <property type="entry name" value="PFN"/>
</dbReference>
<dbReference type="InterPro" id="IPR005455">
    <property type="entry name" value="PFN_euk"/>
</dbReference>
<dbReference type="InterPro" id="IPR036140">
    <property type="entry name" value="PFN_sf"/>
</dbReference>
<dbReference type="InterPro" id="IPR027310">
    <property type="entry name" value="Profilin_CS"/>
</dbReference>
<dbReference type="PANTHER" id="PTHR11604">
    <property type="entry name" value="PROFILIN"/>
    <property type="match status" value="1"/>
</dbReference>
<dbReference type="PANTHER" id="PTHR11604:SF25">
    <property type="entry name" value="PROFILIN-5"/>
    <property type="match status" value="1"/>
</dbReference>
<dbReference type="Pfam" id="PF00235">
    <property type="entry name" value="Profilin"/>
    <property type="match status" value="1"/>
</dbReference>
<dbReference type="PRINTS" id="PR00392">
    <property type="entry name" value="PROFILIN"/>
</dbReference>
<dbReference type="PRINTS" id="PR01640">
    <property type="entry name" value="PROFILINPLNT"/>
</dbReference>
<dbReference type="SMART" id="SM00392">
    <property type="entry name" value="PROF"/>
    <property type="match status" value="1"/>
</dbReference>
<dbReference type="SUPFAM" id="SSF55770">
    <property type="entry name" value="Profilin (actin-binding protein)"/>
    <property type="match status" value="1"/>
</dbReference>
<dbReference type="PROSITE" id="PS00414">
    <property type="entry name" value="PROFILIN"/>
    <property type="match status" value="1"/>
</dbReference>
<sequence length="134" mass="14413">MSWQTYVDDHLMCDIEGHEGHRLTAAAIVGHDGSVWAQSATFPQFKPEEMNGIMTDFNEPGHLAPTGLHLGGTKYMVIQGEAGAVIRGKKGSGGITIKKTGQALVCGIYEEPVTPGQCNMVVERLGDYLLEQGL</sequence>
<feature type="initiator methionine" description="Removed" evidence="1">
    <location>
        <position position="1"/>
    </location>
</feature>
<feature type="chain" id="PRO_0000425008" description="Profilin-2">
    <location>
        <begin position="2"/>
        <end position="134"/>
    </location>
</feature>
<feature type="short sequence motif" description="Involved in PIP2 interaction">
    <location>
        <begin position="84"/>
        <end position="100"/>
    </location>
</feature>
<feature type="modified residue" description="Phosphothreonine" evidence="1">
    <location>
        <position position="114"/>
    </location>
</feature>
<feature type="disulfide bond" evidence="2">
    <location>
        <begin position="13"/>
        <end position="118"/>
    </location>
</feature>